<keyword id="KW-0131">Cell cycle</keyword>
<keyword id="KW-0132">Cell division</keyword>
<keyword id="KW-0143">Chaperone</keyword>
<keyword id="KW-0963">Cytoplasm</keyword>
<keyword id="KW-0413">Isomerase</keyword>
<keyword id="KW-0697">Rotamase</keyword>
<evidence type="ECO:0000255" key="1">
    <source>
        <dbReference type="HAMAP-Rule" id="MF_00303"/>
    </source>
</evidence>
<feature type="chain" id="PRO_0000256529" description="Trigger factor">
    <location>
        <begin position="1"/>
        <end position="431"/>
    </location>
</feature>
<feature type="domain" description="PPIase FKBP-type" evidence="1">
    <location>
        <begin position="165"/>
        <end position="250"/>
    </location>
</feature>
<dbReference type="EC" id="5.2.1.8" evidence="1"/>
<dbReference type="EMBL" id="CP000061">
    <property type="protein sequence ID" value="ABC65451.1"/>
    <property type="molecule type" value="Genomic_DNA"/>
</dbReference>
<dbReference type="RefSeq" id="WP_011412615.1">
    <property type="nucleotide sequence ID" value="NC_007716.1"/>
</dbReference>
<dbReference type="SMR" id="Q2NJE2"/>
<dbReference type="STRING" id="322098.AYWB_334"/>
<dbReference type="KEGG" id="ayw:AYWB_334"/>
<dbReference type="eggNOG" id="COG0544">
    <property type="taxonomic scope" value="Bacteria"/>
</dbReference>
<dbReference type="HOGENOM" id="CLU_033058_3_2_14"/>
<dbReference type="OrthoDB" id="9767721at2"/>
<dbReference type="PhylomeDB" id="Q2NJE2"/>
<dbReference type="Proteomes" id="UP000001934">
    <property type="component" value="Chromosome"/>
</dbReference>
<dbReference type="GO" id="GO:0005737">
    <property type="term" value="C:cytoplasm"/>
    <property type="evidence" value="ECO:0007669"/>
    <property type="project" value="UniProtKB-SubCell"/>
</dbReference>
<dbReference type="GO" id="GO:0003755">
    <property type="term" value="F:peptidyl-prolyl cis-trans isomerase activity"/>
    <property type="evidence" value="ECO:0007669"/>
    <property type="project" value="UniProtKB-UniRule"/>
</dbReference>
<dbReference type="GO" id="GO:0044183">
    <property type="term" value="F:protein folding chaperone"/>
    <property type="evidence" value="ECO:0007669"/>
    <property type="project" value="TreeGrafter"/>
</dbReference>
<dbReference type="GO" id="GO:0043022">
    <property type="term" value="F:ribosome binding"/>
    <property type="evidence" value="ECO:0007669"/>
    <property type="project" value="TreeGrafter"/>
</dbReference>
<dbReference type="GO" id="GO:0051083">
    <property type="term" value="P:'de novo' cotranslational protein folding"/>
    <property type="evidence" value="ECO:0007669"/>
    <property type="project" value="TreeGrafter"/>
</dbReference>
<dbReference type="GO" id="GO:0051301">
    <property type="term" value="P:cell division"/>
    <property type="evidence" value="ECO:0007669"/>
    <property type="project" value="UniProtKB-KW"/>
</dbReference>
<dbReference type="GO" id="GO:0061077">
    <property type="term" value="P:chaperone-mediated protein folding"/>
    <property type="evidence" value="ECO:0007669"/>
    <property type="project" value="TreeGrafter"/>
</dbReference>
<dbReference type="GO" id="GO:0015031">
    <property type="term" value="P:protein transport"/>
    <property type="evidence" value="ECO:0007669"/>
    <property type="project" value="UniProtKB-UniRule"/>
</dbReference>
<dbReference type="GO" id="GO:0043335">
    <property type="term" value="P:protein unfolding"/>
    <property type="evidence" value="ECO:0007669"/>
    <property type="project" value="TreeGrafter"/>
</dbReference>
<dbReference type="FunFam" id="3.10.50.40:FF:000001">
    <property type="entry name" value="Trigger factor"/>
    <property type="match status" value="1"/>
</dbReference>
<dbReference type="Gene3D" id="3.10.50.40">
    <property type="match status" value="1"/>
</dbReference>
<dbReference type="Gene3D" id="3.30.70.1050">
    <property type="entry name" value="Trigger factor ribosome-binding domain"/>
    <property type="match status" value="1"/>
</dbReference>
<dbReference type="Gene3D" id="1.10.3120.10">
    <property type="entry name" value="Trigger factor, C-terminal domain"/>
    <property type="match status" value="1"/>
</dbReference>
<dbReference type="HAMAP" id="MF_00303">
    <property type="entry name" value="Trigger_factor_Tig"/>
    <property type="match status" value="1"/>
</dbReference>
<dbReference type="InterPro" id="IPR046357">
    <property type="entry name" value="PPIase_dom_sf"/>
</dbReference>
<dbReference type="InterPro" id="IPR001179">
    <property type="entry name" value="PPIase_FKBP_dom"/>
</dbReference>
<dbReference type="InterPro" id="IPR005215">
    <property type="entry name" value="Trig_fac"/>
</dbReference>
<dbReference type="InterPro" id="IPR008880">
    <property type="entry name" value="Trigger_fac_C"/>
</dbReference>
<dbReference type="InterPro" id="IPR037041">
    <property type="entry name" value="Trigger_fac_C_sf"/>
</dbReference>
<dbReference type="InterPro" id="IPR008881">
    <property type="entry name" value="Trigger_fac_ribosome-bd_bac"/>
</dbReference>
<dbReference type="InterPro" id="IPR036611">
    <property type="entry name" value="Trigger_fac_ribosome-bd_sf"/>
</dbReference>
<dbReference type="InterPro" id="IPR027304">
    <property type="entry name" value="Trigger_fact/SurA_dom_sf"/>
</dbReference>
<dbReference type="NCBIfam" id="TIGR00115">
    <property type="entry name" value="tig"/>
    <property type="match status" value="1"/>
</dbReference>
<dbReference type="PANTHER" id="PTHR30560">
    <property type="entry name" value="TRIGGER FACTOR CHAPERONE AND PEPTIDYL-PROLYL CIS/TRANS ISOMERASE"/>
    <property type="match status" value="1"/>
</dbReference>
<dbReference type="PANTHER" id="PTHR30560:SF3">
    <property type="entry name" value="TRIGGER FACTOR-LIKE PROTEIN TIG, CHLOROPLASTIC"/>
    <property type="match status" value="1"/>
</dbReference>
<dbReference type="Pfam" id="PF00254">
    <property type="entry name" value="FKBP_C"/>
    <property type="match status" value="1"/>
</dbReference>
<dbReference type="Pfam" id="PF05698">
    <property type="entry name" value="Trigger_C"/>
    <property type="match status" value="1"/>
</dbReference>
<dbReference type="Pfam" id="PF05697">
    <property type="entry name" value="Trigger_N"/>
    <property type="match status" value="1"/>
</dbReference>
<dbReference type="PIRSF" id="PIRSF003095">
    <property type="entry name" value="Trigger_factor"/>
    <property type="match status" value="1"/>
</dbReference>
<dbReference type="SUPFAM" id="SSF54534">
    <property type="entry name" value="FKBP-like"/>
    <property type="match status" value="1"/>
</dbReference>
<dbReference type="SUPFAM" id="SSF109998">
    <property type="entry name" value="Triger factor/SurA peptide-binding domain-like"/>
    <property type="match status" value="1"/>
</dbReference>
<dbReference type="SUPFAM" id="SSF102735">
    <property type="entry name" value="Trigger factor ribosome-binding domain"/>
    <property type="match status" value="1"/>
</dbReference>
<dbReference type="PROSITE" id="PS50059">
    <property type="entry name" value="FKBP_PPIASE"/>
    <property type="match status" value="1"/>
</dbReference>
<sequence>MKIKKINNQKVQYFFKVSSKELETQLSSAYEKIKSKVEIKGFRKGHVPRKIFENHFGKNNLYSDALENIVQTKYQEILQKKDFESMGMPQVIDLNEKKLKDNQNFTFGLEFIVKPKVILKKYLGLEITKDELEVKDCEVEEKINSLLEKQATLESKTQNNSLELTDTAVFDFEGFVDEKPFEGGTAKNFSLKIGSGQFLPGFEDQMLGMKQGQNKDINITFPSDYHQKKLANKKVIFKVTLHQIKTKKIPQLTDNLVKLLKLANVSTVEELKNNTKKTLLDQKKHKEKENIKKQVIEQLVKNSELQIPQEIISQEKTHLQKEFEKQLKQQNLTLEQYKQYLGIGDEKMEKEFNQQAQKNLQYRLIIEQVAFQEKLTISKEKIEQQYKNLSNHYKVPVNQIKQNLPEKNLQHSLLMDEALDLVINKAVVVTK</sequence>
<comment type="function">
    <text evidence="1">Involved in protein export. Acts as a chaperone by maintaining the newly synthesized protein in an open conformation. Functions as a peptidyl-prolyl cis-trans isomerase.</text>
</comment>
<comment type="catalytic activity">
    <reaction evidence="1">
        <text>[protein]-peptidylproline (omega=180) = [protein]-peptidylproline (omega=0)</text>
        <dbReference type="Rhea" id="RHEA:16237"/>
        <dbReference type="Rhea" id="RHEA-COMP:10747"/>
        <dbReference type="Rhea" id="RHEA-COMP:10748"/>
        <dbReference type="ChEBI" id="CHEBI:83833"/>
        <dbReference type="ChEBI" id="CHEBI:83834"/>
        <dbReference type="EC" id="5.2.1.8"/>
    </reaction>
</comment>
<comment type="subcellular location">
    <subcellularLocation>
        <location>Cytoplasm</location>
    </subcellularLocation>
    <text evidence="1">About half TF is bound to the ribosome near the polypeptide exit tunnel while the other half is free in the cytoplasm.</text>
</comment>
<comment type="domain">
    <text evidence="1">Consists of 3 domains; the N-terminus binds the ribosome, the middle domain has PPIase activity, while the C-terminus has intrinsic chaperone activity on its own.</text>
</comment>
<comment type="similarity">
    <text evidence="1">Belongs to the FKBP-type PPIase family. Tig subfamily.</text>
</comment>
<protein>
    <recommendedName>
        <fullName evidence="1">Trigger factor</fullName>
        <shortName evidence="1">TF</shortName>
        <ecNumber evidence="1">5.2.1.8</ecNumber>
    </recommendedName>
    <alternativeName>
        <fullName evidence="1">PPIase</fullName>
    </alternativeName>
</protein>
<proteinExistence type="inferred from homology"/>
<gene>
    <name evidence="1" type="primary">tig</name>
    <name type="ordered locus">AYWB_334</name>
</gene>
<accession>Q2NJE2</accession>
<name>TIG_AYWBP</name>
<reference key="1">
    <citation type="journal article" date="2006" name="J. Bacteriol.">
        <title>Living with genome instability: the adaptation of phytoplasmas to diverse environments of their insect and plant hosts.</title>
        <authorList>
            <person name="Bai X."/>
            <person name="Zhang J."/>
            <person name="Ewing A."/>
            <person name="Miller S.A."/>
            <person name="Jancso Radek A."/>
            <person name="Shevchenko D.V."/>
            <person name="Tsukerman K."/>
            <person name="Walunas T."/>
            <person name="Lapidus A."/>
            <person name="Campbell J.W."/>
            <person name="Hogenhout S.A."/>
        </authorList>
    </citation>
    <scope>NUCLEOTIDE SEQUENCE [LARGE SCALE GENOMIC DNA]</scope>
    <source>
        <strain>AYWB</strain>
    </source>
</reference>
<organism>
    <name type="scientific">Aster yellows witches'-broom phytoplasma (strain AYWB)</name>
    <dbReference type="NCBI Taxonomy" id="322098"/>
    <lineage>
        <taxon>Bacteria</taxon>
        <taxon>Bacillati</taxon>
        <taxon>Mycoplasmatota</taxon>
        <taxon>Mollicutes</taxon>
        <taxon>Acholeplasmatales</taxon>
        <taxon>Acholeplasmataceae</taxon>
        <taxon>Candidatus Phytoplasma</taxon>
        <taxon>16SrI (Aster yellows group)</taxon>
    </lineage>
</organism>